<accession>P12882</accession>
<accession>Q14CA4</accession>
<accession>Q9Y622</accession>
<proteinExistence type="evidence at protein level"/>
<dbReference type="EMBL" id="AF111785">
    <property type="protein sequence ID" value="AAD29951.1"/>
    <property type="molecule type" value="mRNA"/>
</dbReference>
<dbReference type="EMBL" id="AC005323">
    <property type="status" value="NOT_ANNOTATED_CDS"/>
    <property type="molecule type" value="Genomic_DNA"/>
</dbReference>
<dbReference type="EMBL" id="BC114545">
    <property type="protein sequence ID" value="AAI14546.1"/>
    <property type="molecule type" value="mRNA"/>
</dbReference>
<dbReference type="EMBL" id="X03740">
    <property type="protein sequence ID" value="CAA27380.1"/>
    <property type="molecule type" value="mRNA"/>
</dbReference>
<dbReference type="CCDS" id="CCDS11155.1"/>
<dbReference type="PIR" id="A23767">
    <property type="entry name" value="A23767"/>
</dbReference>
<dbReference type="RefSeq" id="NP_005954.3">
    <property type="nucleotide sequence ID" value="NM_005963.3"/>
</dbReference>
<dbReference type="RefSeq" id="XP_016880164.1">
    <property type="nucleotide sequence ID" value="XM_017024675.2"/>
</dbReference>
<dbReference type="SMR" id="P12882"/>
<dbReference type="BioGRID" id="110704">
    <property type="interactions" value="76"/>
</dbReference>
<dbReference type="FunCoup" id="P12882">
    <property type="interactions" value="546"/>
</dbReference>
<dbReference type="IntAct" id="P12882">
    <property type="interactions" value="45"/>
</dbReference>
<dbReference type="MINT" id="P12882"/>
<dbReference type="STRING" id="9606.ENSP00000226207"/>
<dbReference type="BindingDB" id="P12882"/>
<dbReference type="CarbonylDB" id="P12882"/>
<dbReference type="GlyCosmos" id="P12882">
    <property type="glycosylation" value="1 site, 1 glycan"/>
</dbReference>
<dbReference type="GlyGen" id="P12882">
    <property type="glycosylation" value="2 sites, 1 O-linked glycan (2 sites)"/>
</dbReference>
<dbReference type="iPTMnet" id="P12882"/>
<dbReference type="PhosphoSitePlus" id="P12882"/>
<dbReference type="BioMuta" id="MYH1"/>
<dbReference type="DMDM" id="226694176"/>
<dbReference type="jPOST" id="P12882"/>
<dbReference type="MassIVE" id="P12882"/>
<dbReference type="PaxDb" id="9606-ENSP00000226207"/>
<dbReference type="PeptideAtlas" id="P12882"/>
<dbReference type="ProteomicsDB" id="52882"/>
<dbReference type="Pumba" id="P12882"/>
<dbReference type="Antibodypedia" id="4383">
    <property type="antibodies" value="197 antibodies from 28 providers"/>
</dbReference>
<dbReference type="DNASU" id="4619"/>
<dbReference type="Ensembl" id="ENST00000226207.6">
    <property type="protein sequence ID" value="ENSP00000226207.5"/>
    <property type="gene ID" value="ENSG00000109061.10"/>
</dbReference>
<dbReference type="GeneID" id="4619"/>
<dbReference type="KEGG" id="hsa:4619"/>
<dbReference type="MANE-Select" id="ENST00000226207.6">
    <property type="protein sequence ID" value="ENSP00000226207.5"/>
    <property type="RefSeq nucleotide sequence ID" value="NM_005963.4"/>
    <property type="RefSeq protein sequence ID" value="NP_005954.3"/>
</dbReference>
<dbReference type="UCSC" id="uc002gmo.4">
    <property type="organism name" value="human"/>
</dbReference>
<dbReference type="AGR" id="HGNC:7567"/>
<dbReference type="CTD" id="4619"/>
<dbReference type="DisGeNET" id="4619"/>
<dbReference type="GeneCards" id="MYH1"/>
<dbReference type="HGNC" id="HGNC:7567">
    <property type="gene designation" value="MYH1"/>
</dbReference>
<dbReference type="HPA" id="ENSG00000109061">
    <property type="expression patterns" value="Tissue enriched (skeletal)"/>
</dbReference>
<dbReference type="MalaCards" id="MYH1"/>
<dbReference type="MIM" id="160730">
    <property type="type" value="gene"/>
</dbReference>
<dbReference type="neXtProt" id="NX_P12882"/>
<dbReference type="OpenTargets" id="ENSG00000109061"/>
<dbReference type="PharmGKB" id="PA31365"/>
<dbReference type="VEuPathDB" id="HostDB:ENSG00000109061"/>
<dbReference type="eggNOG" id="KOG0161">
    <property type="taxonomic scope" value="Eukaryota"/>
</dbReference>
<dbReference type="GeneTree" id="ENSGT00940000154760"/>
<dbReference type="HOGENOM" id="CLU_000192_8_1_1"/>
<dbReference type="InParanoid" id="P12882"/>
<dbReference type="OMA" id="TWDWFLL"/>
<dbReference type="OrthoDB" id="312459at2759"/>
<dbReference type="PAN-GO" id="P12882">
    <property type="GO annotations" value="6 GO annotations based on evolutionary models"/>
</dbReference>
<dbReference type="PhylomeDB" id="P12882"/>
<dbReference type="TreeFam" id="TF314375"/>
<dbReference type="PathwayCommons" id="P12882"/>
<dbReference type="SignaLink" id="P12882"/>
<dbReference type="SIGNOR" id="P12882"/>
<dbReference type="BioGRID-ORCS" id="4619">
    <property type="hits" value="9 hits in 1152 CRISPR screens"/>
</dbReference>
<dbReference type="CD-CODE" id="232F8A39">
    <property type="entry name" value="P-body"/>
</dbReference>
<dbReference type="GeneWiki" id="MYH1"/>
<dbReference type="GenomeRNAi" id="4619"/>
<dbReference type="Pharos" id="P12882">
    <property type="development level" value="Tbio"/>
</dbReference>
<dbReference type="PRO" id="PR:P12882"/>
<dbReference type="Proteomes" id="UP000005640">
    <property type="component" value="Chromosome 17"/>
</dbReference>
<dbReference type="RNAct" id="P12882">
    <property type="molecule type" value="protein"/>
</dbReference>
<dbReference type="Bgee" id="ENSG00000109061">
    <property type="expression patterns" value="Expressed in skeletal muscle tissue of rectus abdominis and 97 other cell types or tissues"/>
</dbReference>
<dbReference type="GO" id="GO:0031672">
    <property type="term" value="C:A band"/>
    <property type="evidence" value="ECO:0007669"/>
    <property type="project" value="Ensembl"/>
</dbReference>
<dbReference type="GO" id="GO:0005737">
    <property type="term" value="C:cytoplasm"/>
    <property type="evidence" value="ECO:0000318"/>
    <property type="project" value="GO_Central"/>
</dbReference>
<dbReference type="GO" id="GO:0036464">
    <property type="term" value="C:cytoplasmic ribonucleoprotein granule"/>
    <property type="evidence" value="ECO:0000314"/>
    <property type="project" value="ParkinsonsUK-UCL"/>
</dbReference>
<dbReference type="GO" id="GO:0014704">
    <property type="term" value="C:intercalated disc"/>
    <property type="evidence" value="ECO:0007669"/>
    <property type="project" value="Ensembl"/>
</dbReference>
<dbReference type="GO" id="GO:0005859">
    <property type="term" value="C:muscle myosin complex"/>
    <property type="evidence" value="ECO:0000314"/>
    <property type="project" value="MGI"/>
</dbReference>
<dbReference type="GO" id="GO:0032982">
    <property type="term" value="C:myosin filament"/>
    <property type="evidence" value="ECO:0000318"/>
    <property type="project" value="GO_Central"/>
</dbReference>
<dbReference type="GO" id="GO:0016460">
    <property type="term" value="C:myosin II complex"/>
    <property type="evidence" value="ECO:0000318"/>
    <property type="project" value="GO_Central"/>
</dbReference>
<dbReference type="GO" id="GO:0051015">
    <property type="term" value="F:actin filament binding"/>
    <property type="evidence" value="ECO:0000318"/>
    <property type="project" value="GO_Central"/>
</dbReference>
<dbReference type="GO" id="GO:0005524">
    <property type="term" value="F:ATP binding"/>
    <property type="evidence" value="ECO:0007669"/>
    <property type="project" value="UniProtKB-KW"/>
</dbReference>
<dbReference type="GO" id="GO:0005516">
    <property type="term" value="F:calmodulin binding"/>
    <property type="evidence" value="ECO:0007669"/>
    <property type="project" value="UniProtKB-KW"/>
</dbReference>
<dbReference type="GO" id="GO:0000146">
    <property type="term" value="F:microfilament motor activity"/>
    <property type="evidence" value="ECO:0000318"/>
    <property type="project" value="GO_Central"/>
</dbReference>
<dbReference type="GO" id="GO:0006936">
    <property type="term" value="P:muscle contraction"/>
    <property type="evidence" value="ECO:0000318"/>
    <property type="project" value="GO_Central"/>
</dbReference>
<dbReference type="CDD" id="cd14910">
    <property type="entry name" value="MYSc_Myh1_mammals"/>
    <property type="match status" value="1"/>
</dbReference>
<dbReference type="FunFam" id="1.10.10.820:FF:000001">
    <property type="entry name" value="Myosin heavy chain"/>
    <property type="match status" value="1"/>
</dbReference>
<dbReference type="FunFam" id="1.20.5.340:FF:000002">
    <property type="entry name" value="Myosin heavy chain"/>
    <property type="match status" value="1"/>
</dbReference>
<dbReference type="FunFam" id="1.20.5.340:FF:000003">
    <property type="entry name" value="Myosin heavy chain"/>
    <property type="match status" value="1"/>
</dbReference>
<dbReference type="FunFam" id="1.20.5.340:FF:000004">
    <property type="entry name" value="Myosin heavy chain"/>
    <property type="match status" value="1"/>
</dbReference>
<dbReference type="FunFam" id="1.20.5.340:FF:000006">
    <property type="entry name" value="Myosin heavy chain"/>
    <property type="match status" value="1"/>
</dbReference>
<dbReference type="FunFam" id="1.20.5.340:FF:000013">
    <property type="entry name" value="Myosin heavy chain"/>
    <property type="match status" value="1"/>
</dbReference>
<dbReference type="FunFam" id="1.20.5.370:FF:000001">
    <property type="entry name" value="Myosin heavy chain"/>
    <property type="match status" value="1"/>
</dbReference>
<dbReference type="FunFam" id="1.20.5.370:FF:000002">
    <property type="entry name" value="Myosin heavy chain"/>
    <property type="match status" value="1"/>
</dbReference>
<dbReference type="FunFam" id="1.20.5.370:FF:000003">
    <property type="entry name" value="Myosin heavy chain"/>
    <property type="match status" value="1"/>
</dbReference>
<dbReference type="FunFam" id="1.20.5.370:FF:000007">
    <property type="entry name" value="Myosin heavy chain"/>
    <property type="match status" value="1"/>
</dbReference>
<dbReference type="FunFam" id="1.20.5.370:FF:000008">
    <property type="entry name" value="Myosin heavy chain"/>
    <property type="match status" value="1"/>
</dbReference>
<dbReference type="FunFam" id="1.20.5.4820:FF:000001">
    <property type="entry name" value="Myosin heavy chain"/>
    <property type="match status" value="1"/>
</dbReference>
<dbReference type="FunFam" id="1.20.58.530:FF:000001">
    <property type="entry name" value="Myosin heavy chain"/>
    <property type="match status" value="1"/>
</dbReference>
<dbReference type="FunFam" id="2.30.30.360:FF:000001">
    <property type="entry name" value="Myosin heavy chain"/>
    <property type="match status" value="1"/>
</dbReference>
<dbReference type="FunFam" id="3.40.850.10:FF:000024">
    <property type="entry name" value="Myosin heavy chain, isoform J"/>
    <property type="match status" value="1"/>
</dbReference>
<dbReference type="FunFam" id="1.20.120.720:FF:000001">
    <property type="entry name" value="Myosin heavy chain, muscle"/>
    <property type="match status" value="1"/>
</dbReference>
<dbReference type="Gene3D" id="1.10.10.820">
    <property type="match status" value="1"/>
</dbReference>
<dbReference type="Gene3D" id="1.20.5.340">
    <property type="match status" value="5"/>
</dbReference>
<dbReference type="Gene3D" id="1.20.5.370">
    <property type="match status" value="4"/>
</dbReference>
<dbReference type="Gene3D" id="1.20.5.4820">
    <property type="match status" value="1"/>
</dbReference>
<dbReference type="Gene3D" id="1.20.58.530">
    <property type="match status" value="1"/>
</dbReference>
<dbReference type="Gene3D" id="6.10.250.2420">
    <property type="match status" value="1"/>
</dbReference>
<dbReference type="Gene3D" id="3.40.850.10">
    <property type="entry name" value="Kinesin motor domain"/>
    <property type="match status" value="1"/>
</dbReference>
<dbReference type="Gene3D" id="2.30.30.360">
    <property type="entry name" value="Myosin S1 fragment, N-terminal"/>
    <property type="match status" value="1"/>
</dbReference>
<dbReference type="Gene3D" id="1.20.120.720">
    <property type="entry name" value="Myosin VI head, motor domain, U50 subdomain"/>
    <property type="match status" value="1"/>
</dbReference>
<dbReference type="InterPro" id="IPR000048">
    <property type="entry name" value="IQ_motif_EF-hand-BS"/>
</dbReference>
<dbReference type="InterPro" id="IPR036961">
    <property type="entry name" value="Kinesin_motor_dom_sf"/>
</dbReference>
<dbReference type="InterPro" id="IPR001609">
    <property type="entry name" value="Myosin_head_motor_dom-like"/>
</dbReference>
<dbReference type="InterPro" id="IPR004009">
    <property type="entry name" value="Myosin_N"/>
</dbReference>
<dbReference type="InterPro" id="IPR008989">
    <property type="entry name" value="Myosin_S1_N"/>
</dbReference>
<dbReference type="InterPro" id="IPR002928">
    <property type="entry name" value="Myosin_tail"/>
</dbReference>
<dbReference type="InterPro" id="IPR027417">
    <property type="entry name" value="P-loop_NTPase"/>
</dbReference>
<dbReference type="InterPro" id="IPR014751">
    <property type="entry name" value="XRCC4-like_C"/>
</dbReference>
<dbReference type="PANTHER" id="PTHR45615">
    <property type="entry name" value="MYOSIN HEAVY CHAIN, NON-MUSCLE"/>
    <property type="match status" value="1"/>
</dbReference>
<dbReference type="PANTHER" id="PTHR45615:SF2">
    <property type="entry name" value="MYOSIN-1"/>
    <property type="match status" value="1"/>
</dbReference>
<dbReference type="Pfam" id="PF00063">
    <property type="entry name" value="Myosin_head"/>
    <property type="match status" value="1"/>
</dbReference>
<dbReference type="Pfam" id="PF02736">
    <property type="entry name" value="Myosin_N"/>
    <property type="match status" value="1"/>
</dbReference>
<dbReference type="Pfam" id="PF01576">
    <property type="entry name" value="Myosin_tail_1"/>
    <property type="match status" value="1"/>
</dbReference>
<dbReference type="PRINTS" id="PR00193">
    <property type="entry name" value="MYOSINHEAVY"/>
</dbReference>
<dbReference type="SMART" id="SM00015">
    <property type="entry name" value="IQ"/>
    <property type="match status" value="1"/>
</dbReference>
<dbReference type="SMART" id="SM00242">
    <property type="entry name" value="MYSc"/>
    <property type="match status" value="1"/>
</dbReference>
<dbReference type="SUPFAM" id="SSF90257">
    <property type="entry name" value="Myosin rod fragments"/>
    <property type="match status" value="5"/>
</dbReference>
<dbReference type="SUPFAM" id="SSF52540">
    <property type="entry name" value="P-loop containing nucleoside triphosphate hydrolases"/>
    <property type="match status" value="1"/>
</dbReference>
<dbReference type="SUPFAM" id="SSF57997">
    <property type="entry name" value="Tropomyosin"/>
    <property type="match status" value="1"/>
</dbReference>
<dbReference type="PROSITE" id="PS50096">
    <property type="entry name" value="IQ"/>
    <property type="match status" value="1"/>
</dbReference>
<dbReference type="PROSITE" id="PS51456">
    <property type="entry name" value="MYOSIN_MOTOR"/>
    <property type="match status" value="1"/>
</dbReference>
<dbReference type="PROSITE" id="PS51844">
    <property type="entry name" value="SH3_LIKE"/>
    <property type="match status" value="1"/>
</dbReference>
<reference key="1">
    <citation type="journal article" date="1999" name="J. Mol. Biol.">
        <title>Comparative sequence analysis of the complete human sarcomeric myosin heavy chain family: implications for functional diversity.</title>
        <authorList>
            <person name="Weiss A."/>
            <person name="Schiaffino S."/>
            <person name="Leinwand L.A."/>
        </authorList>
    </citation>
    <scope>NUCLEOTIDE SEQUENCE [MRNA]</scope>
    <source>
        <tissue>Skeletal muscle</tissue>
    </source>
</reference>
<reference key="2">
    <citation type="journal article" date="2006" name="Nature">
        <title>DNA sequence of human chromosome 17 and analysis of rearrangement in the human lineage.</title>
        <authorList>
            <person name="Zody M.C."/>
            <person name="Garber M."/>
            <person name="Adams D.J."/>
            <person name="Sharpe T."/>
            <person name="Harrow J."/>
            <person name="Lupski J.R."/>
            <person name="Nicholson C."/>
            <person name="Searle S.M."/>
            <person name="Wilming L."/>
            <person name="Young S.K."/>
            <person name="Abouelleil A."/>
            <person name="Allen N.R."/>
            <person name="Bi W."/>
            <person name="Bloom T."/>
            <person name="Borowsky M.L."/>
            <person name="Bugalter B.E."/>
            <person name="Butler J."/>
            <person name="Chang J.L."/>
            <person name="Chen C.-K."/>
            <person name="Cook A."/>
            <person name="Corum B."/>
            <person name="Cuomo C.A."/>
            <person name="de Jong P.J."/>
            <person name="DeCaprio D."/>
            <person name="Dewar K."/>
            <person name="FitzGerald M."/>
            <person name="Gilbert J."/>
            <person name="Gibson R."/>
            <person name="Gnerre S."/>
            <person name="Goldstein S."/>
            <person name="Grafham D.V."/>
            <person name="Grocock R."/>
            <person name="Hafez N."/>
            <person name="Hagopian D.S."/>
            <person name="Hart E."/>
            <person name="Norman C.H."/>
            <person name="Humphray S."/>
            <person name="Jaffe D.B."/>
            <person name="Jones M."/>
            <person name="Kamal M."/>
            <person name="Khodiyar V.K."/>
            <person name="LaButti K."/>
            <person name="Laird G."/>
            <person name="Lehoczky J."/>
            <person name="Liu X."/>
            <person name="Lokyitsang T."/>
            <person name="Loveland J."/>
            <person name="Lui A."/>
            <person name="Macdonald P."/>
            <person name="Major J.E."/>
            <person name="Matthews L."/>
            <person name="Mauceli E."/>
            <person name="McCarroll S.A."/>
            <person name="Mihalev A.H."/>
            <person name="Mudge J."/>
            <person name="Nguyen C."/>
            <person name="Nicol R."/>
            <person name="O'Leary S.B."/>
            <person name="Osoegawa K."/>
            <person name="Schwartz D.C."/>
            <person name="Shaw-Smith C."/>
            <person name="Stankiewicz P."/>
            <person name="Steward C."/>
            <person name="Swarbreck D."/>
            <person name="Venkataraman V."/>
            <person name="Whittaker C.A."/>
            <person name="Yang X."/>
            <person name="Zimmer A.R."/>
            <person name="Bradley A."/>
            <person name="Hubbard T."/>
            <person name="Birren B.W."/>
            <person name="Rogers J."/>
            <person name="Lander E.S."/>
            <person name="Nusbaum C."/>
        </authorList>
    </citation>
    <scope>NUCLEOTIDE SEQUENCE [LARGE SCALE GENOMIC DNA]</scope>
</reference>
<reference key="3">
    <citation type="journal article" date="2004" name="Genome Res.">
        <title>The status, quality, and expansion of the NIH full-length cDNA project: the Mammalian Gene Collection (MGC).</title>
        <authorList>
            <consortium name="The MGC Project Team"/>
        </authorList>
    </citation>
    <scope>NUCLEOTIDE SEQUENCE [LARGE SCALE MRNA]</scope>
</reference>
<reference key="4">
    <citation type="journal article" date="1986" name="Nucleic Acids Res.">
        <title>Characterization of diverse forms of myosin heavy chain expressed in adult human skeletal muscle.</title>
        <authorList>
            <person name="Saez L."/>
            <person name="Leinwand L.A."/>
        </authorList>
    </citation>
    <scope>NUCLEOTIDE SEQUENCE [MRNA] OF 1064-1939</scope>
</reference>
<reference key="5">
    <citation type="journal article" date="2006" name="Science">
        <title>The consensus coding sequences of human breast and colorectal cancers.</title>
        <authorList>
            <person name="Sjoeblom T."/>
            <person name="Jones S."/>
            <person name="Wood L.D."/>
            <person name="Parsons D.W."/>
            <person name="Lin J."/>
            <person name="Barber T.D."/>
            <person name="Mandelker D."/>
            <person name="Leary R.J."/>
            <person name="Ptak J."/>
            <person name="Silliman N."/>
            <person name="Szabo S."/>
            <person name="Buckhaults P."/>
            <person name="Farrell C."/>
            <person name="Meeh P."/>
            <person name="Markowitz S.D."/>
            <person name="Willis J."/>
            <person name="Dawson D."/>
            <person name="Willson J.K.V."/>
            <person name="Gazdar A.F."/>
            <person name="Hartigan J."/>
            <person name="Wu L."/>
            <person name="Liu C."/>
            <person name="Parmigiani G."/>
            <person name="Park B.H."/>
            <person name="Bachman K.E."/>
            <person name="Papadopoulos N."/>
            <person name="Vogelstein B."/>
            <person name="Kinzler K.W."/>
            <person name="Velculescu V.E."/>
        </authorList>
    </citation>
    <scope>VARIANTS [LARGE SCALE ANALYSIS] LEU-1306; THR-1445 AND MET-1598</scope>
</reference>
<reference key="6">
    <citation type="journal article" date="2008" name="Nature">
        <title>DNA sequencing of a cytogenetically normal acute myeloid leukaemia genome.</title>
        <authorList>
            <person name="Ley T.J."/>
            <person name="Mardis E.R."/>
            <person name="Ding L."/>
            <person name="Fulton B."/>
            <person name="McLellan M.D."/>
            <person name="Chen K."/>
            <person name="Dooling D."/>
            <person name="Dunford-Shore B.H."/>
            <person name="McGrath S."/>
            <person name="Hickenbotham M."/>
            <person name="Cook L."/>
            <person name="Abbott R."/>
            <person name="Larson D.E."/>
            <person name="Koboldt D.C."/>
            <person name="Pohl C."/>
            <person name="Smith S."/>
            <person name="Hawkins A."/>
            <person name="Abbott S."/>
            <person name="Locke D."/>
            <person name="Hillier L.W."/>
            <person name="Miner T."/>
            <person name="Fulton L."/>
            <person name="Magrini V."/>
            <person name="Wylie T."/>
            <person name="Glasscock J."/>
            <person name="Conyers J."/>
            <person name="Sander N."/>
            <person name="Shi X."/>
            <person name="Osborne J.R."/>
            <person name="Minx P."/>
            <person name="Gordon D."/>
            <person name="Chinwalla A."/>
            <person name="Zhao Y."/>
            <person name="Ries R.E."/>
            <person name="Payton J.E."/>
            <person name="Westervelt P."/>
            <person name="Tomasson M.H."/>
            <person name="Watson M."/>
            <person name="Baty J."/>
            <person name="Ivanovich J."/>
            <person name="Heath S."/>
            <person name="Shannon W.D."/>
            <person name="Nagarajan R."/>
            <person name="Walter M.J."/>
            <person name="Link D.C."/>
            <person name="Graubert T.A."/>
            <person name="DiPersio J.F."/>
            <person name="Wilson R.K."/>
        </authorList>
    </citation>
    <scope>VARIANT [LARGE SCALE ANALYSIS] SER-640</scope>
</reference>
<reference key="7">
    <citation type="journal article" date="2011" name="Nature">
        <title>Exome sequencing identifies frequent mutation of the SWI/SNF complex gene PBRM1 in renal carcinoma.</title>
        <authorList>
            <person name="Varela I."/>
            <person name="Tarpey P."/>
            <person name="Raine K."/>
            <person name="Huang D."/>
            <person name="Ong C.K."/>
            <person name="Stephens P."/>
            <person name="Davies H."/>
            <person name="Jones D."/>
            <person name="Lin M.L."/>
            <person name="Teague J."/>
            <person name="Bignell G."/>
            <person name="Butler A."/>
            <person name="Cho J."/>
            <person name="Dalgliesh G.L."/>
            <person name="Galappaththige D."/>
            <person name="Greenman C."/>
            <person name="Hardy C."/>
            <person name="Jia M."/>
            <person name="Latimer C."/>
            <person name="Lau K.W."/>
            <person name="Marshall J."/>
            <person name="McLaren S."/>
            <person name="Menzies A."/>
            <person name="Mudie L."/>
            <person name="Stebbings L."/>
            <person name="Largaespada D.A."/>
            <person name="Wessels L.F.A."/>
            <person name="Richard S."/>
            <person name="Kahnoski R.J."/>
            <person name="Anema J."/>
            <person name="Tuveson D.A."/>
            <person name="Perez-Mancera P.A."/>
            <person name="Mustonen V."/>
            <person name="Fischer A."/>
            <person name="Adams D.J."/>
            <person name="Rust A."/>
            <person name="Chan-On W."/>
            <person name="Subimerb C."/>
            <person name="Dykema K."/>
            <person name="Furge K."/>
            <person name="Campbell P.J."/>
            <person name="Teh B.T."/>
            <person name="Stratton M.R."/>
            <person name="Futreal P.A."/>
        </authorList>
    </citation>
    <scope>VARIANT LYS-1566</scope>
</reference>
<reference key="8">
    <citation type="journal article" date="2024" name="Exp. Mol. Med.">
        <title>MYH1 deficiency disrupts outer hair cell electromotility, resulting in hearing loss.</title>
        <authorList>
            <person name="Jung J."/>
            <person name="Joo S.Y."/>
            <person name="Min H."/>
            <person name="Roh J.W."/>
            <person name="Kim K.A."/>
            <person name="Ma J.H."/>
            <person name="Rim J.H."/>
            <person name="Kim J.A."/>
            <person name="Kim S.J."/>
            <person name="Jang S.H."/>
            <person name="Koh Y.I."/>
            <person name="Kim H.Y."/>
            <person name="Lee H."/>
            <person name="Kim B.C."/>
            <person name="Gee H.Y."/>
            <person name="Bok J."/>
            <person name="Choi J.Y."/>
            <person name="Seong J.K."/>
        </authorList>
    </citation>
    <scope>INTERACTION WITH SLC26A5</scope>
    <scope>VARIANTS HIS-194; THR-460; THR-744; VAL-813; ARG-832; VAL-993; HIS-1539 AND LYS-1806</scope>
</reference>
<gene>
    <name evidence="15" type="primary">MYH1</name>
</gene>
<name>MYH1_HUMAN</name>
<feature type="chain" id="PRO_0000123391" description="Myosin-1">
    <location>
        <begin position="1"/>
        <end position="1939"/>
    </location>
</feature>
<feature type="domain" description="Myosin N-terminal SH3-like" evidence="8">
    <location>
        <begin position="33"/>
        <end position="82"/>
    </location>
</feature>
<feature type="domain" description="Myosin motor" evidence="7">
    <location>
        <begin position="86"/>
        <end position="782"/>
    </location>
</feature>
<feature type="domain" description="IQ" evidence="6">
    <location>
        <begin position="785"/>
        <end position="814"/>
    </location>
</feature>
<feature type="region of interest" description="Actin-binding" evidence="1">
    <location>
        <begin position="659"/>
        <end position="681"/>
    </location>
</feature>
<feature type="region of interest" description="Actin-binding" evidence="1">
    <location>
        <begin position="761"/>
        <end position="775"/>
    </location>
</feature>
<feature type="coiled-coil region" evidence="5">
    <location>
        <begin position="843"/>
        <end position="1939"/>
    </location>
</feature>
<feature type="binding site" evidence="5">
    <location>
        <begin position="179"/>
        <end position="186"/>
    </location>
    <ligand>
        <name>ATP</name>
        <dbReference type="ChEBI" id="CHEBI:30616"/>
    </ligand>
</feature>
<feature type="modified residue" description="Phosphothreonine" evidence="3">
    <location>
        <position position="64"/>
    </location>
</feature>
<feature type="modified residue" description="Phosphothreonine" evidence="3">
    <location>
        <position position="69"/>
    </location>
</feature>
<feature type="modified residue" description="N6,N6,N6-trimethyllysine" evidence="5">
    <location>
        <position position="130"/>
    </location>
</feature>
<feature type="modified residue" description="Phosphotyrosine" evidence="3">
    <location>
        <position position="389"/>
    </location>
</feature>
<feature type="modified residue" description="Phosphothreonine" evidence="3">
    <location>
        <position position="419"/>
    </location>
</feature>
<feature type="modified residue" description="Phosphotyrosine" evidence="3">
    <location>
        <position position="424"/>
    </location>
</feature>
<feature type="modified residue" description="Pros-methylhistidine" evidence="2">
    <location>
        <position position="757"/>
    </location>
</feature>
<feature type="modified residue" description="Phosphoserine" evidence="3">
    <location>
        <position position="1092"/>
    </location>
</feature>
<feature type="modified residue" description="Phosphoserine" evidence="3">
    <location>
        <position position="1096"/>
    </location>
</feature>
<feature type="modified residue" description="Phosphoserine" evidence="3">
    <location>
        <position position="1162"/>
    </location>
</feature>
<feature type="modified residue" description="Phosphoserine" evidence="3">
    <location>
        <position position="1237"/>
    </location>
</feature>
<feature type="modified residue" description="Phosphothreonine" evidence="3">
    <location>
        <position position="1241"/>
    </location>
</feature>
<feature type="modified residue" description="Phosphoserine" evidence="3">
    <location>
        <position position="1243"/>
    </location>
</feature>
<feature type="modified residue" description="Phosphoserine" evidence="3">
    <location>
        <position position="1261"/>
    </location>
</feature>
<feature type="modified residue" description="Phosphothreonine" evidence="3">
    <location>
        <position position="1265"/>
    </location>
</feature>
<feature type="modified residue" description="Phosphothreonine" evidence="3">
    <location>
        <position position="1286"/>
    </location>
</feature>
<feature type="modified residue" description="Phosphoserine" evidence="3">
    <location>
        <position position="1288"/>
    </location>
</feature>
<feature type="modified residue" description="Phosphoserine" evidence="3">
    <location>
        <position position="1292"/>
    </location>
</feature>
<feature type="modified residue" description="Phosphoserine" evidence="3">
    <location>
        <position position="1303"/>
    </location>
</feature>
<feature type="modified residue" description="Phosphoserine" evidence="3">
    <location>
        <position position="1306"/>
    </location>
</feature>
<feature type="modified residue" description="Phosphothreonine" evidence="3">
    <location>
        <position position="1467"/>
    </location>
</feature>
<feature type="modified residue" description="Phosphoserine" evidence="3">
    <location>
        <position position="1474"/>
    </location>
</feature>
<feature type="modified residue" description="Phosphotyrosine" evidence="3">
    <location>
        <position position="1492"/>
    </location>
</feature>
<feature type="modified residue" description="Phosphoserine" evidence="3">
    <location>
        <position position="1495"/>
    </location>
</feature>
<feature type="modified residue" description="Phosphothreonine" evidence="3">
    <location>
        <position position="1501"/>
    </location>
</feature>
<feature type="modified residue" description="Phosphoserine" evidence="3">
    <location>
        <position position="1514"/>
    </location>
</feature>
<feature type="modified residue" description="Phosphothreonine" evidence="3">
    <location>
        <position position="1517"/>
    </location>
</feature>
<feature type="modified residue" description="Phosphoserine" evidence="3">
    <location>
        <position position="1542"/>
    </location>
</feature>
<feature type="modified residue" description="Phosphoserine" evidence="3">
    <location>
        <position position="1554"/>
    </location>
</feature>
<feature type="modified residue" description="Phosphoserine" evidence="3">
    <location>
        <position position="1574"/>
    </location>
</feature>
<feature type="modified residue" description="Phosphoserine" evidence="3">
    <location>
        <position position="1600"/>
    </location>
</feature>
<feature type="modified residue" description="Phosphoserine" evidence="3">
    <location>
        <position position="1603"/>
    </location>
</feature>
<feature type="modified residue" description="Phosphoserine" evidence="3">
    <location>
        <position position="1714"/>
    </location>
</feature>
<feature type="modified residue" description="Phosphoserine" evidence="3">
    <location>
        <position position="1726"/>
    </location>
</feature>
<feature type="modified residue" description="Phosphothreonine" evidence="3">
    <location>
        <position position="1730"/>
    </location>
</feature>
<feature type="modified residue" description="Phosphothreonine" evidence="3">
    <location>
        <position position="1736"/>
    </location>
</feature>
<feature type="modified residue" description="Phosphoserine" evidence="3">
    <location>
        <position position="1739"/>
    </location>
</feature>
<feature type="sequence variant" id="VAR_090483" description="Found in autosomal recessive deafness; uncertain significance." evidence="12">
    <original>Q</original>
    <variation>H</variation>
    <location>
        <position position="194"/>
    </location>
</feature>
<feature type="sequence variant" id="VAR_090484" description="Found in autosomal recessive deafness; uncertain significance." evidence="12">
    <original>I</original>
    <variation>T</variation>
    <location>
        <position position="460"/>
    </location>
</feature>
<feature type="sequence variant" id="VAR_054159" description="In dbSNP:rs150346984." evidence="10">
    <original>G</original>
    <variation>S</variation>
    <location>
        <position position="640"/>
    </location>
</feature>
<feature type="sequence variant" id="VAR_090485" description="Found in autosomal recessive deafness; uncertain significance." evidence="12">
    <original>K</original>
    <variation>T</variation>
    <location>
        <position position="744"/>
    </location>
</feature>
<feature type="sequence variant" id="VAR_090486" description="Found in autosomal recessive deafness; uncertain significance." evidence="12">
    <original>E</original>
    <variation>V</variation>
    <location>
        <position position="813"/>
    </location>
</feature>
<feature type="sequence variant" id="VAR_090487" description="Found in autosomal recessive deafness; uncertain significance." evidence="12">
    <original>P</original>
    <variation>R</variation>
    <location>
        <position position="832"/>
    </location>
</feature>
<feature type="sequence variant" id="VAR_090488" description="Found in autosomal recessive deafness; uncertain significance." evidence="12">
    <original>I</original>
    <variation>V</variation>
    <location>
        <position position="993"/>
    </location>
</feature>
<feature type="sequence variant" id="VAR_036003" description="In a breast cancer sample; somatic mutation; dbSNP:rs752643679." evidence="9">
    <original>S</original>
    <variation>L</variation>
    <location>
        <position position="1306"/>
    </location>
</feature>
<feature type="sequence variant" id="VAR_030193" description="In dbSNP:rs3744564.">
    <original>R</original>
    <variation>C</variation>
    <location>
        <position position="1341"/>
    </location>
</feature>
<feature type="sequence variant" id="VAR_036004" description="In a breast cancer sample; somatic mutation; dbSNP:rs139860229." evidence="9">
    <original>A</original>
    <variation>T</variation>
    <location>
        <position position="1445"/>
    </location>
</feature>
<feature type="sequence variant" id="VAR_030194" description="Found in autosomal recessive deafness; uncertain significance; dbSNP:rs3764850." evidence="12">
    <original>Q</original>
    <variation>H</variation>
    <location>
        <position position="1539"/>
    </location>
</feature>
<feature type="sequence variant" id="VAR_064735" description="Found in a renal cell carcinoma sample; somatic mutation." evidence="11">
    <original>Q</original>
    <variation>K</variation>
    <location>
        <position position="1566"/>
    </location>
</feature>
<feature type="sequence variant" id="VAR_036005" description="In a breast cancer sample; somatic mutation; dbSNP:rs150456818." evidence="9">
    <original>V</original>
    <variation>M</variation>
    <location>
        <position position="1598"/>
    </location>
</feature>
<feature type="sequence variant" id="VAR_030195" description="In dbSNP:rs1077841.">
    <original>R</original>
    <variation>C</variation>
    <location>
        <position position="1716"/>
    </location>
</feature>
<feature type="sequence variant" id="VAR_090489" description="Found in autosomal recessive deafness; uncertain significance." evidence="12">
    <original>Q</original>
    <variation>K</variation>
    <location>
        <position position="1806"/>
    </location>
</feature>
<feature type="sequence conflict" description="In Ref. 1; AAD29951 and 4; CAA27380." evidence="14" ref="1 4">
    <original>T</original>
    <variation>A</variation>
    <location>
        <position position="1070"/>
    </location>
</feature>
<feature type="sequence conflict" description="In Ref. 4; CAA27380." evidence="14" ref="4">
    <original>A</original>
    <variation>T</variation>
    <location>
        <position position="1131"/>
    </location>
</feature>
<feature type="sequence conflict" description="In Ref. 4; CAA27380." evidence="14" ref="4">
    <original>Q</original>
    <variation>L</variation>
    <location>
        <position position="1139"/>
    </location>
</feature>
<feature type="sequence conflict" description="In Ref. 4; CAA27380." evidence="14" ref="4">
    <original>G</original>
    <variation>V</variation>
    <location>
        <position position="1158"/>
    </location>
</feature>
<feature type="sequence conflict" description="In Ref. 4; CAA27380." evidence="14" ref="4">
    <original>A</original>
    <variation>T</variation>
    <location>
        <position position="1163"/>
    </location>
</feature>
<feature type="sequence conflict" description="In Ref. 4; CAA27380." evidence="14" ref="4">
    <original>TESG</original>
    <variation>QNQV</variation>
    <location>
        <begin position="1286"/>
        <end position="1289"/>
    </location>
</feature>
<feature type="sequence conflict" description="In Ref. 4; CAA27380." evidence="14" ref="4">
    <original>VS</original>
    <variation>ET</variation>
    <location>
        <begin position="1302"/>
        <end position="1303"/>
    </location>
</feature>
<feature type="sequence conflict" description="In Ref. 4; CAA27380." evidence="14" ref="4">
    <original>R</original>
    <variation>T</variation>
    <location>
        <position position="1451"/>
    </location>
</feature>
<feature type="sequence conflict" description="In Ref. 4; CAA27380." evidence="14" ref="4">
    <original>E</original>
    <variation>V</variation>
    <location>
        <position position="1470"/>
    </location>
</feature>
<feature type="sequence conflict" description="In Ref. 4; CAA27380." evidence="14" ref="4">
    <original>AS</original>
    <variation>SF</variation>
    <location>
        <begin position="1473"/>
        <end position="1474"/>
    </location>
</feature>
<feature type="sequence conflict" description="In Ref. 3; AAI14546." evidence="14" ref="3">
    <original>E</original>
    <variation>K</variation>
    <location>
        <position position="1531"/>
    </location>
</feature>
<feature type="sequence conflict" description="In Ref. 4; CAA27380." evidence="14" ref="4">
    <original>L</original>
    <variation>V</variation>
    <location>
        <position position="1569"/>
    </location>
</feature>
<feature type="sequence conflict" description="In Ref. 4; CAA27380." evidence="14" ref="4">
    <original>V</original>
    <variation>E</variation>
    <location>
        <position position="1598"/>
    </location>
</feature>
<feature type="sequence conflict" description="In Ref. 4; CAA27380." evidence="14" ref="4">
    <original>D</original>
    <variation>N</variation>
    <location>
        <position position="1606"/>
    </location>
</feature>
<feature type="sequence conflict" description="In Ref. 4; CAA27380." evidence="14" ref="4">
    <original>A</original>
    <variation>D</variation>
    <location>
        <position position="1643"/>
    </location>
</feature>
<feature type="sequence conflict" description="In Ref. 4; CAA27380." evidence="14" ref="4">
    <original>R</original>
    <variation>Q</variation>
    <location>
        <position position="1648"/>
    </location>
</feature>
<feature type="sequence conflict" description="In Ref. 4; CAA27380." evidence="14" ref="4">
    <original>Q</original>
    <variation>K</variation>
    <location>
        <position position="1750"/>
    </location>
</feature>
<feature type="sequence conflict" description="In Ref. 4; CAA27380." evidence="14" ref="4">
    <original>R</original>
    <variation>K</variation>
    <location>
        <position position="1822"/>
    </location>
</feature>
<feature type="sequence conflict" description="In Ref. 4; CAA27380." evidence="14" ref="4">
    <original>R</original>
    <variation>H</variation>
    <location>
        <position position="1845"/>
    </location>
</feature>
<keyword id="KW-0009">Actin-binding</keyword>
<keyword id="KW-0067">ATP-binding</keyword>
<keyword id="KW-0112">Calmodulin-binding</keyword>
<keyword id="KW-0175">Coiled coil</keyword>
<keyword id="KW-0963">Cytoplasm</keyword>
<keyword id="KW-1009">Hearing</keyword>
<keyword id="KW-0488">Methylation</keyword>
<keyword id="KW-0505">Motor protein</keyword>
<keyword id="KW-0514">Muscle protein</keyword>
<keyword id="KW-0518">Myosin</keyword>
<keyword id="KW-0547">Nucleotide-binding</keyword>
<keyword id="KW-0597">Phosphoprotein</keyword>
<keyword id="KW-1267">Proteomics identification</keyword>
<keyword id="KW-1185">Reference proteome</keyword>
<keyword id="KW-0787">Thick filament</keyword>
<protein>
    <recommendedName>
        <fullName>Myosin-1</fullName>
    </recommendedName>
    <alternativeName>
        <fullName evidence="13">Myosin heavy chain 1</fullName>
    </alternativeName>
    <alternativeName>
        <fullName>Myosin heavy chain 2x</fullName>
        <shortName>MyHC-2x</shortName>
    </alternativeName>
    <alternativeName>
        <fullName>Myosin heavy chain IIx/d</fullName>
        <shortName>MyHC-IIx/d</shortName>
    </alternativeName>
    <alternativeName>
        <fullName>Myosin heavy chain, skeletal muscle, adult 1</fullName>
    </alternativeName>
</protein>
<organism>
    <name type="scientific">Homo sapiens</name>
    <name type="common">Human</name>
    <dbReference type="NCBI Taxonomy" id="9606"/>
    <lineage>
        <taxon>Eukaryota</taxon>
        <taxon>Metazoa</taxon>
        <taxon>Chordata</taxon>
        <taxon>Craniata</taxon>
        <taxon>Vertebrata</taxon>
        <taxon>Euteleostomi</taxon>
        <taxon>Mammalia</taxon>
        <taxon>Eutheria</taxon>
        <taxon>Euarchontoglires</taxon>
        <taxon>Primates</taxon>
        <taxon>Haplorrhini</taxon>
        <taxon>Catarrhini</taxon>
        <taxon>Hominidae</taxon>
        <taxon>Homo</taxon>
    </lineage>
</organism>
<sequence>MSSDSEMAIFGEAAPFLRKSERERIEAQNKPFDAKTSVFVVDPKESFVKATVQSREGGKVTAKTEAGATVTVKDDQVFPMNPPKYDKIEDMAMMTHLHEPAVLYNLKERYAAWMIYTYSGLFCVTVNPYKWLPVYNAEVVTAYRGKKRQEAPPHIFSISDNAYQFMLTDRENQSILITGESGAGKTVNTKRVIQYFATIAVTGEKKKEEVTSGKMQGTLEDQIISANPLLEAFGNAKTVRNDNSSRFGKFIRIHFGTTGKLASADIETYLLEKSRVTFQLKAERSYHIFYQIMSNKKPDLIEMLLITTNPYDYAFVSQGEITVPSIDDQEELMATDSAIEILGFTSDERVSIYKLTGAVMHYGNMKFKQKQREEQAEPDGTEVADKAAYLQNLNSADLLKALCYPRVKVGNEYVTKGQTVQQVYNAVGALAKAVYDKMFLWMVTRINQQLDTKQPRQYFIGVLDIAGFEIFDFNSLEQLCINFTNEKLQQFFNHHMFVLEQEEYKKEGIEWTFIDFGMDLAACIELIEKPMGIFSILEEECMFPKATDTSFKNKLYEQHLGKSNNFQKPKPAKGKPEAHFSLIHYAGTVDYNIAGWLDKNKDPLNETVVGLYQKSAMKTLALLFVGATGAEAEAGGGKKGGKKKGSSFQTVSALFRENLNKLMTNLRSTHPHFVRCIIPNETKTPGAMEHELVLHQLRCNGVLEGIRICRKGFPSRILYADFKQRYKVLNASAIPEGQFIDSKKASEKLLGSIDIDHTQYKFGHTKVFFKAGLLGLLEEMRDEKLAQLITRTQAMCRGFLARVEYQKMVERRESIFCIQYNVRAFMNVKHWPWMKLYFKIKPLLKSAETEKEMANMKEEFEKTKEELAKTEAKRKELEEKMVTLMQEKNDLQLQVQAEADSLADAEERCDQLIKTKIQLEAKIKEVTERAEDEEEINAELTAKKRKLEDECSELKKDIDDLELTLAKVEKEKHATENKVKNLTEEMAGLDETIAKLTKEKKALQEAHQQTLDDLQAEEDKVNTLTKAKIKLEQQVDDLEGSLEQEKKIRMDLERAKRKLEGDLKLAQESTMDIENDKQQLDEKLKKKEFEMSGLQSKIEDEQALGMQLQKKIKELQARIEELEEEIEAERASRAKAEKQRSDLSRELEEISERLEEAGGATSAQIEMNKKREAEFQKMRRDLEEATLQHEATAATLRKKHADSVAELGEQIDNLQRVKQKLEKEKSEMKMEIDDLASNMETVSKAKGNLEKMCRALEDQLSEIKTKEEEQQRLINDLTAQRARLQTESGEYSRQLDEKDTLVSQLSRGKQAFTQQIEELKRQLEEEIKAKSALAHALQSSRHDCDLLREQYEEEQEAKAELQRAMSKANSEVAQWRTKYETDAIQRTEELEEAKKKLAQRLQDAEEHVEAVNAKCASLEKTKQRLQNEVEDLMIDVERTNAACAALDKKQRNFDKILAEWKQKCEETHAELEASQKESRSLSTELFKIKNAYEESLDQLETLKRENKNLQQEISDLTEQIAEGGKRIHELEKIKKQVEQEKSELQAALEEAEASLEHEEGKILRIQLELNQVKSEVDRKIAEKDEEIDQMKRNHIRIVESMQSTLDAEIRSRNDAIRLKKKMEGDLNEMEIQLNHANRMAAEALRNYRNTQAILKDTQLHLDDALRSQEDLKEQLAMVERRANLLQAEIEELRATLEQTERSRKIAEQELLDASERVQLLHTQNTSLINTKKKLETDISQIQGEMEDIIQEARNAEEKAKKAITDAAMMAEELKKEQDTSAHLERMKKNLEQTVKDLQHRLDEAEQLALKGGKKQIQKLEARVRELEGEVESEQKRNVEAVKGLRKHERKVKELTYQTEEDRKNILRLQDLVDKLQAKVKSYKRQAEEAEEQSNVNLSKFRRIQHELEEAEERADIAESQVNKLRVKSREVHTKIISEE</sequence>
<evidence type="ECO:0000250" key="1"/>
<evidence type="ECO:0000250" key="2">
    <source>
        <dbReference type="UniProtKB" id="Q28641"/>
    </source>
</evidence>
<evidence type="ECO:0000250" key="3">
    <source>
        <dbReference type="UniProtKB" id="Q29RW1"/>
    </source>
</evidence>
<evidence type="ECO:0000250" key="4">
    <source>
        <dbReference type="UniProtKB" id="Q5SX40"/>
    </source>
</evidence>
<evidence type="ECO:0000255" key="5"/>
<evidence type="ECO:0000255" key="6">
    <source>
        <dbReference type="PROSITE-ProRule" id="PRU00116"/>
    </source>
</evidence>
<evidence type="ECO:0000255" key="7">
    <source>
        <dbReference type="PROSITE-ProRule" id="PRU00782"/>
    </source>
</evidence>
<evidence type="ECO:0000255" key="8">
    <source>
        <dbReference type="PROSITE-ProRule" id="PRU01190"/>
    </source>
</evidence>
<evidence type="ECO:0000269" key="9">
    <source>
    </source>
</evidence>
<evidence type="ECO:0000269" key="10">
    <source>
    </source>
</evidence>
<evidence type="ECO:0000269" key="11">
    <source>
    </source>
</evidence>
<evidence type="ECO:0000269" key="12">
    <source>
    </source>
</evidence>
<evidence type="ECO:0000303" key="13">
    <source>
    </source>
</evidence>
<evidence type="ECO:0000305" key="14"/>
<evidence type="ECO:0000312" key="15">
    <source>
        <dbReference type="HGNC" id="HGNC:7567"/>
    </source>
</evidence>
<comment type="function">
    <text evidence="4">Required for normal hearing. It plays a role in cochlear amplification of auditory stimuli, likely through the positive regulation of prestin (SLC26A5) activity and outer hair cell (OHC) electromotility.</text>
</comment>
<comment type="subunit">
    <text evidence="12">Muscle myosin is a hexameric protein that consists of 2 heavy chain subunits (MHC), 2 alkali light chain subunits (MLC) and 2 regulatory light chain subunits (MLC-2). Interacts with SLC26A5 (PubMed:39482536).</text>
</comment>
<comment type="interaction">
    <interactant intactId="EBI-366238">
        <id>P12882</id>
    </interactant>
    <interactant intactId="EBI-11977221">
        <id>Q86Z20</id>
        <label>CCDC125</label>
    </interactant>
    <organismsDiffer>false</organismsDiffer>
    <experiments>3</experiments>
</comment>
<comment type="interaction">
    <interactant intactId="EBI-366238">
        <id>P12882</id>
    </interactant>
    <interactant intactId="EBI-10171552">
        <id>A1A4E9</id>
        <label>KRT13</label>
    </interactant>
    <organismsDiffer>false</organismsDiffer>
    <experiments>3</experiments>
</comment>
<comment type="subcellular location">
    <subcellularLocation>
        <location>Cytoplasm</location>
        <location>Myofibril</location>
    </subcellularLocation>
    <text>Thick filaments of the myofibrils.</text>
</comment>
<comment type="domain">
    <text>The rodlike tail sequence is highly repetitive, showing cycles of a 28-residue repeat pattern composed of 4 heptapeptides, characteristic for alpha-helical coiled coils.</text>
</comment>
<comment type="domain">
    <text evidence="14">Limited proteolysis of myosin heavy chain produces 1 light meromyosin (LMM) and 1 heavy meromyosin (HMM). HMM can be further cleaved into 2 globular subfragments (S1) and 1 rod-shaped subfragment (S2).</text>
</comment>
<comment type="similarity">
    <text evidence="14">Belongs to the TRAFAC class myosin-kinesin ATPase superfamily. Myosin family.</text>
</comment>
<comment type="caution">
    <text evidence="14">Represents a conventional myosin. This protein should not be confused with the unconventional myosin-1 (MYO1).</text>
</comment>